<dbReference type="EMBL" id="D50601">
    <property type="protein sequence ID" value="BAA09162.1"/>
    <property type="molecule type" value="Genomic_DNA"/>
</dbReference>
<dbReference type="SMR" id="P0A1L4"/>
<dbReference type="STRING" id="216599.GCA_000283715_05244"/>
<dbReference type="GO" id="GO:0005886">
    <property type="term" value="C:plasma membrane"/>
    <property type="evidence" value="ECO:0007669"/>
    <property type="project" value="UniProtKB-SubCell"/>
</dbReference>
<dbReference type="GO" id="GO:0009306">
    <property type="term" value="P:protein secretion"/>
    <property type="evidence" value="ECO:0007669"/>
    <property type="project" value="InterPro"/>
</dbReference>
<dbReference type="InterPro" id="IPR005838">
    <property type="entry name" value="T3SS_IM_P"/>
</dbReference>
<dbReference type="InterPro" id="IPR005773">
    <property type="entry name" value="T3SS_YscR-like"/>
</dbReference>
<dbReference type="NCBIfam" id="NF009437">
    <property type="entry name" value="PRK12796.1"/>
    <property type="match status" value="1"/>
</dbReference>
<dbReference type="NCBIfam" id="NF009438">
    <property type="entry name" value="PRK12797.1"/>
    <property type="match status" value="1"/>
</dbReference>
<dbReference type="NCBIfam" id="TIGR01102">
    <property type="entry name" value="yscR"/>
    <property type="match status" value="1"/>
</dbReference>
<dbReference type="PANTHER" id="PTHR30587">
    <property type="entry name" value="FLAGELLAR BIOSYNTHETIC PROTEIN FLIP"/>
    <property type="match status" value="1"/>
</dbReference>
<dbReference type="PANTHER" id="PTHR30587:SF2">
    <property type="entry name" value="SURFACE PRESENTATION OF ANTIGENS PROTEIN SPAP"/>
    <property type="match status" value="1"/>
</dbReference>
<dbReference type="Pfam" id="PF00813">
    <property type="entry name" value="FliP"/>
    <property type="match status" value="1"/>
</dbReference>
<dbReference type="PRINTS" id="PR01302">
    <property type="entry name" value="TYPE3IMPPROT"/>
</dbReference>
<dbReference type="PROSITE" id="PS01060">
    <property type="entry name" value="FLIP_1"/>
    <property type="match status" value="1"/>
</dbReference>
<dbReference type="PROSITE" id="PS01061">
    <property type="entry name" value="FLIP_2"/>
    <property type="match status" value="1"/>
</dbReference>
<gene>
    <name type="primary">spaP</name>
    <name type="synonym">spa24</name>
</gene>
<feature type="chain" id="PRO_0000191994" description="Surface presentation of antigens protein SpaP">
    <location>
        <begin position="1"/>
        <end position="216"/>
    </location>
</feature>
<feature type="transmembrane region" description="Helical" evidence="2">
    <location>
        <begin position="8"/>
        <end position="28"/>
    </location>
</feature>
<feature type="transmembrane region" description="Helical" evidence="2">
    <location>
        <begin position="52"/>
        <end position="72"/>
    </location>
</feature>
<feature type="transmembrane region" description="Helical" evidence="2">
    <location>
        <begin position="153"/>
        <end position="173"/>
    </location>
</feature>
<feature type="transmembrane region" description="Helical" evidence="2">
    <location>
        <begin position="183"/>
        <end position="203"/>
    </location>
</feature>
<proteinExistence type="inferred from homology"/>
<reference key="1">
    <citation type="submission" date="1995-05" db="EMBL/GenBank/DDBJ databases">
        <title>Comparison and high conservation of nucleotide sequences of spa-mxi regions between S.sonnei and S.flexneri -- identification of a new gene coding plausible membrane protein.</title>
        <authorList>
            <person name="Arakawa E."/>
            <person name="Kato J."/>
            <person name="Ito K."/>
            <person name="Watanabe H."/>
        </authorList>
    </citation>
    <scope>NUCLEOTIDE SEQUENCE [GENOMIC DNA]</scope>
    <source>
        <strain>HW383</strain>
    </source>
</reference>
<comment type="function">
    <text evidence="1">Required for surface presentation of invasion plasmid antigens. Could play a role in preserving the translocation competence of the ipa antigens. Required for invasion and for secretion of the three Ipa proteins (By similarity).</text>
</comment>
<comment type="subcellular location">
    <subcellularLocation>
        <location evidence="3">Cell membrane</location>
        <topology evidence="3">Multi-pass membrane protein</topology>
    </subcellularLocation>
</comment>
<comment type="similarity">
    <text evidence="3">Belongs to the FliP/MopC/SpaP family.</text>
</comment>
<sequence>MLSDMSLIATLSFFTLLPFLVAAGTCYIKFSIVFVMVRNALGLQQVPSNMTLNGIALIMALFVMKPIIEAGYENYLNGPQKFDTISDIVRFSDSGLMEYKQYLKKHTDLELARFFQRSEEENADLKSAENNDYSLFSLLPAYALSEIKDAFKIGFYLYLPFVVVDLVISSILLALGMMMMSPITISVPIKLVLFVALDGWGILSKALIEQYINIPA</sequence>
<name>SPAP_SHISO</name>
<keyword id="KW-1003">Cell membrane</keyword>
<keyword id="KW-0472">Membrane</keyword>
<keyword id="KW-0614">Plasmid</keyword>
<keyword id="KW-0812">Transmembrane</keyword>
<keyword id="KW-1133">Transmembrane helix</keyword>
<keyword id="KW-0843">Virulence</keyword>
<evidence type="ECO:0000250" key="1"/>
<evidence type="ECO:0000255" key="2"/>
<evidence type="ECO:0000305" key="3"/>
<geneLocation type="plasmid">
    <name>pINV</name>
</geneLocation>
<protein>
    <recommendedName>
        <fullName>Surface presentation of antigens protein SpaP</fullName>
    </recommendedName>
    <alternativeName>
        <fullName>Spa24 protein</fullName>
    </alternativeName>
</protein>
<accession>P0A1L4</accession>
<accession>P35529</accession>
<organism>
    <name type="scientific">Shigella sonnei</name>
    <dbReference type="NCBI Taxonomy" id="624"/>
    <lineage>
        <taxon>Bacteria</taxon>
        <taxon>Pseudomonadati</taxon>
        <taxon>Pseudomonadota</taxon>
        <taxon>Gammaproteobacteria</taxon>
        <taxon>Enterobacterales</taxon>
        <taxon>Enterobacteriaceae</taxon>
        <taxon>Shigella</taxon>
    </lineage>
</organism>